<proteinExistence type="inferred from homology"/>
<comment type="function">
    <text evidence="1">This protein binds to the 23S rRNA, and is important in its secondary structure. It is located near the subunit interface in the base of the L7/L12 stalk, and near the tRNA binding site of the peptidyltransferase center.</text>
</comment>
<comment type="subunit">
    <text evidence="1">Part of the 50S ribosomal subunit.</text>
</comment>
<comment type="similarity">
    <text evidence="1">Belongs to the universal ribosomal protein uL6 family.</text>
</comment>
<reference key="1">
    <citation type="journal article" date="2009" name="Appl. Environ. Microbiol.">
        <title>Three genomes from the phylum Acidobacteria provide insight into the lifestyles of these microorganisms in soils.</title>
        <authorList>
            <person name="Ward N.L."/>
            <person name="Challacombe J.F."/>
            <person name="Janssen P.H."/>
            <person name="Henrissat B."/>
            <person name="Coutinho P.M."/>
            <person name="Wu M."/>
            <person name="Xie G."/>
            <person name="Haft D.H."/>
            <person name="Sait M."/>
            <person name="Badger J."/>
            <person name="Barabote R.D."/>
            <person name="Bradley B."/>
            <person name="Brettin T.S."/>
            <person name="Brinkac L.M."/>
            <person name="Bruce D."/>
            <person name="Creasy T."/>
            <person name="Daugherty S.C."/>
            <person name="Davidsen T.M."/>
            <person name="DeBoy R.T."/>
            <person name="Detter J.C."/>
            <person name="Dodson R.J."/>
            <person name="Durkin A.S."/>
            <person name="Ganapathy A."/>
            <person name="Gwinn-Giglio M."/>
            <person name="Han C.S."/>
            <person name="Khouri H."/>
            <person name="Kiss H."/>
            <person name="Kothari S.P."/>
            <person name="Madupu R."/>
            <person name="Nelson K.E."/>
            <person name="Nelson W.C."/>
            <person name="Paulsen I."/>
            <person name="Penn K."/>
            <person name="Ren Q."/>
            <person name="Rosovitz M.J."/>
            <person name="Selengut J.D."/>
            <person name="Shrivastava S."/>
            <person name="Sullivan S.A."/>
            <person name="Tapia R."/>
            <person name="Thompson L.S."/>
            <person name="Watkins K.L."/>
            <person name="Yang Q."/>
            <person name="Yu C."/>
            <person name="Zafar N."/>
            <person name="Zhou L."/>
            <person name="Kuske C.R."/>
        </authorList>
    </citation>
    <scope>NUCLEOTIDE SEQUENCE [LARGE SCALE GENOMIC DNA]</scope>
    <source>
        <strain>Ellin345</strain>
    </source>
</reference>
<name>RL6_KORVE</name>
<organism>
    <name type="scientific">Koribacter versatilis (strain Ellin345)</name>
    <dbReference type="NCBI Taxonomy" id="204669"/>
    <lineage>
        <taxon>Bacteria</taxon>
        <taxon>Pseudomonadati</taxon>
        <taxon>Acidobacteriota</taxon>
        <taxon>Terriglobia</taxon>
        <taxon>Terriglobales</taxon>
        <taxon>Candidatus Korobacteraceae</taxon>
        <taxon>Candidatus Korobacter</taxon>
    </lineage>
</organism>
<keyword id="KW-1185">Reference proteome</keyword>
<keyword id="KW-0687">Ribonucleoprotein</keyword>
<keyword id="KW-0689">Ribosomal protein</keyword>
<keyword id="KW-0694">RNA-binding</keyword>
<keyword id="KW-0699">rRNA-binding</keyword>
<gene>
    <name evidence="1" type="primary">rplF</name>
    <name type="ordered locus">Acid345_1241</name>
</gene>
<sequence>MSRIGKKPIAVPKGVTFNVQGDVVTVKGPKGTVSNHLPGGVKLALEDGNIVVTRDDESKRAIHGLVRALVNNAVEGVTKGWTRNLEIVGIGYRAELKGKGTVVFTLGYSHPIEYPLPTGIEAAVDAKQTALTITGIDRQKVGQVAAEMRALRPPDPYKNKGVRYAGEKLKKKVGKTGAK</sequence>
<evidence type="ECO:0000255" key="1">
    <source>
        <dbReference type="HAMAP-Rule" id="MF_01365"/>
    </source>
</evidence>
<evidence type="ECO:0000305" key="2"/>
<dbReference type="EMBL" id="CP000360">
    <property type="protein sequence ID" value="ABF40243.1"/>
    <property type="molecule type" value="Genomic_DNA"/>
</dbReference>
<dbReference type="RefSeq" id="WP_011522045.1">
    <property type="nucleotide sequence ID" value="NC_008009.1"/>
</dbReference>
<dbReference type="SMR" id="Q1ISA7"/>
<dbReference type="STRING" id="204669.Acid345_1241"/>
<dbReference type="EnsemblBacteria" id="ABF40243">
    <property type="protein sequence ID" value="ABF40243"/>
    <property type="gene ID" value="Acid345_1241"/>
</dbReference>
<dbReference type="KEGG" id="aba:Acid345_1241"/>
<dbReference type="eggNOG" id="COG0097">
    <property type="taxonomic scope" value="Bacteria"/>
</dbReference>
<dbReference type="HOGENOM" id="CLU_065464_1_2_0"/>
<dbReference type="OrthoDB" id="9805007at2"/>
<dbReference type="Proteomes" id="UP000002432">
    <property type="component" value="Chromosome"/>
</dbReference>
<dbReference type="GO" id="GO:0022625">
    <property type="term" value="C:cytosolic large ribosomal subunit"/>
    <property type="evidence" value="ECO:0007669"/>
    <property type="project" value="TreeGrafter"/>
</dbReference>
<dbReference type="GO" id="GO:0019843">
    <property type="term" value="F:rRNA binding"/>
    <property type="evidence" value="ECO:0007669"/>
    <property type="project" value="UniProtKB-UniRule"/>
</dbReference>
<dbReference type="GO" id="GO:0003735">
    <property type="term" value="F:structural constituent of ribosome"/>
    <property type="evidence" value="ECO:0007669"/>
    <property type="project" value="InterPro"/>
</dbReference>
<dbReference type="GO" id="GO:0002181">
    <property type="term" value="P:cytoplasmic translation"/>
    <property type="evidence" value="ECO:0007669"/>
    <property type="project" value="TreeGrafter"/>
</dbReference>
<dbReference type="FunFam" id="3.90.930.12:FF:000001">
    <property type="entry name" value="50S ribosomal protein L6"/>
    <property type="match status" value="1"/>
</dbReference>
<dbReference type="FunFam" id="3.90.930.12:FF:000002">
    <property type="entry name" value="50S ribosomal protein L6"/>
    <property type="match status" value="1"/>
</dbReference>
<dbReference type="Gene3D" id="3.90.930.12">
    <property type="entry name" value="Ribosomal protein L6, alpha-beta domain"/>
    <property type="match status" value="2"/>
</dbReference>
<dbReference type="HAMAP" id="MF_01365_B">
    <property type="entry name" value="Ribosomal_uL6_B"/>
    <property type="match status" value="1"/>
</dbReference>
<dbReference type="InterPro" id="IPR000702">
    <property type="entry name" value="Ribosomal_uL6-like"/>
</dbReference>
<dbReference type="InterPro" id="IPR036789">
    <property type="entry name" value="Ribosomal_uL6-like_a/b-dom_sf"/>
</dbReference>
<dbReference type="InterPro" id="IPR020040">
    <property type="entry name" value="Ribosomal_uL6_a/b-dom"/>
</dbReference>
<dbReference type="InterPro" id="IPR019906">
    <property type="entry name" value="Ribosomal_uL6_bac-type"/>
</dbReference>
<dbReference type="NCBIfam" id="TIGR03654">
    <property type="entry name" value="L6_bact"/>
    <property type="match status" value="1"/>
</dbReference>
<dbReference type="PANTHER" id="PTHR11655">
    <property type="entry name" value="60S/50S RIBOSOMAL PROTEIN L6/L9"/>
    <property type="match status" value="1"/>
</dbReference>
<dbReference type="PANTHER" id="PTHR11655:SF14">
    <property type="entry name" value="LARGE RIBOSOMAL SUBUNIT PROTEIN UL6M"/>
    <property type="match status" value="1"/>
</dbReference>
<dbReference type="Pfam" id="PF00347">
    <property type="entry name" value="Ribosomal_L6"/>
    <property type="match status" value="2"/>
</dbReference>
<dbReference type="PIRSF" id="PIRSF002162">
    <property type="entry name" value="Ribosomal_L6"/>
    <property type="match status" value="1"/>
</dbReference>
<dbReference type="PRINTS" id="PR00059">
    <property type="entry name" value="RIBOSOMALL6"/>
</dbReference>
<dbReference type="SUPFAM" id="SSF56053">
    <property type="entry name" value="Ribosomal protein L6"/>
    <property type="match status" value="2"/>
</dbReference>
<accession>Q1ISA7</accession>
<feature type="chain" id="PRO_0000265207" description="Large ribosomal subunit protein uL6">
    <location>
        <begin position="1"/>
        <end position="179"/>
    </location>
</feature>
<protein>
    <recommendedName>
        <fullName evidence="1">Large ribosomal subunit protein uL6</fullName>
    </recommendedName>
    <alternativeName>
        <fullName evidence="2">50S ribosomal protein L6</fullName>
    </alternativeName>
</protein>